<reference key="1">
    <citation type="journal article" date="2011" name="PLoS Genet.">
        <title>The evolution of host specialization in the vertebrate gut symbiont Lactobacillus reuteri.</title>
        <authorList>
            <person name="Frese S.A."/>
            <person name="Benson A.K."/>
            <person name="Tannock G.W."/>
            <person name="Loach D.M."/>
            <person name="Kim J."/>
            <person name="Zhang M."/>
            <person name="Oh P.L."/>
            <person name="Heng N.C."/>
            <person name="Patil P.B."/>
            <person name="Juge N."/>
            <person name="Mackenzie D.A."/>
            <person name="Pearson B.M."/>
            <person name="Lapidus A."/>
            <person name="Dalin E."/>
            <person name="Tice H."/>
            <person name="Goltsman E."/>
            <person name="Land M."/>
            <person name="Hauser L."/>
            <person name="Ivanova N."/>
            <person name="Kyrpides N.C."/>
            <person name="Walter J."/>
        </authorList>
    </citation>
    <scope>NUCLEOTIDE SEQUENCE [LARGE SCALE GENOMIC DNA]</scope>
    <source>
        <strain>DSM 20016</strain>
    </source>
</reference>
<proteinExistence type="inferred from homology"/>
<gene>
    <name type="ordered locus">Lreu_0614</name>
</gene>
<dbReference type="EC" id="3.5.1.47" evidence="1"/>
<dbReference type="EMBL" id="CP000705">
    <property type="protein sequence ID" value="ABQ82881.1"/>
    <property type="molecule type" value="Genomic_DNA"/>
</dbReference>
<dbReference type="RefSeq" id="WP_003668294.1">
    <property type="nucleotide sequence ID" value="NC_009513.1"/>
</dbReference>
<dbReference type="SMR" id="A5VJ57"/>
<dbReference type="STRING" id="557436.Lreu_0614"/>
<dbReference type="KEGG" id="lre:Lreu_0614"/>
<dbReference type="PATRIC" id="fig|557436.17.peg.686"/>
<dbReference type="eggNOG" id="COG1473">
    <property type="taxonomic scope" value="Bacteria"/>
</dbReference>
<dbReference type="HOGENOM" id="CLU_023257_0_1_9"/>
<dbReference type="OMA" id="ITSACDR"/>
<dbReference type="UniPathway" id="UPA00034">
    <property type="reaction ID" value="UER00024"/>
</dbReference>
<dbReference type="Proteomes" id="UP000001991">
    <property type="component" value="Chromosome"/>
</dbReference>
<dbReference type="GO" id="GO:0050118">
    <property type="term" value="F:N-acetyldiaminopimelate deacetylase activity"/>
    <property type="evidence" value="ECO:0007669"/>
    <property type="project" value="UniProtKB-UniRule"/>
</dbReference>
<dbReference type="GO" id="GO:0019877">
    <property type="term" value="P:diaminopimelate biosynthetic process"/>
    <property type="evidence" value="ECO:0007669"/>
    <property type="project" value="UniProtKB-UniRule"/>
</dbReference>
<dbReference type="GO" id="GO:0009089">
    <property type="term" value="P:lysine biosynthetic process via diaminopimelate"/>
    <property type="evidence" value="ECO:0007669"/>
    <property type="project" value="UniProtKB-UniRule"/>
</dbReference>
<dbReference type="CDD" id="cd05670">
    <property type="entry name" value="M20_Acy1_YkuR-like"/>
    <property type="match status" value="1"/>
</dbReference>
<dbReference type="FunFam" id="3.30.70.360:FF:000001">
    <property type="entry name" value="N-acetyldiaminopimelate deacetylase"/>
    <property type="match status" value="1"/>
</dbReference>
<dbReference type="Gene3D" id="3.30.70.360">
    <property type="match status" value="1"/>
</dbReference>
<dbReference type="Gene3D" id="3.40.630.10">
    <property type="entry name" value="Zn peptidases"/>
    <property type="match status" value="1"/>
</dbReference>
<dbReference type="HAMAP" id="MF_01692">
    <property type="entry name" value="DapEL"/>
    <property type="match status" value="1"/>
</dbReference>
<dbReference type="InterPro" id="IPR023905">
    <property type="entry name" value="AcetylDAP_deacetylase"/>
</dbReference>
<dbReference type="InterPro" id="IPR017439">
    <property type="entry name" value="Amidohydrolase"/>
</dbReference>
<dbReference type="InterPro" id="IPR036264">
    <property type="entry name" value="Bact_exopeptidase_dim_dom"/>
</dbReference>
<dbReference type="InterPro" id="IPR002933">
    <property type="entry name" value="Peptidase_M20"/>
</dbReference>
<dbReference type="InterPro" id="IPR011650">
    <property type="entry name" value="Peptidase_M20_dimer"/>
</dbReference>
<dbReference type="NCBIfam" id="TIGR01891">
    <property type="entry name" value="amidohydrolases"/>
    <property type="match status" value="1"/>
</dbReference>
<dbReference type="PANTHER" id="PTHR11014:SF98">
    <property type="entry name" value="N-ACETYLDIAMINOPIMELATE DEACETYLASE"/>
    <property type="match status" value="1"/>
</dbReference>
<dbReference type="PANTHER" id="PTHR11014">
    <property type="entry name" value="PEPTIDASE M20 FAMILY MEMBER"/>
    <property type="match status" value="1"/>
</dbReference>
<dbReference type="Pfam" id="PF07687">
    <property type="entry name" value="M20_dimer"/>
    <property type="match status" value="1"/>
</dbReference>
<dbReference type="Pfam" id="PF01546">
    <property type="entry name" value="Peptidase_M20"/>
    <property type="match status" value="1"/>
</dbReference>
<dbReference type="PIRSF" id="PIRSF005962">
    <property type="entry name" value="Pept_M20D_amidohydro"/>
    <property type="match status" value="1"/>
</dbReference>
<dbReference type="SUPFAM" id="SSF55031">
    <property type="entry name" value="Bacterial exopeptidase dimerisation domain"/>
    <property type="match status" value="1"/>
</dbReference>
<dbReference type="SUPFAM" id="SSF53187">
    <property type="entry name" value="Zn-dependent exopeptidases"/>
    <property type="match status" value="1"/>
</dbReference>
<protein>
    <recommendedName>
        <fullName evidence="1">N-acetyldiaminopimelate deacetylase</fullName>
        <ecNumber evidence="1">3.5.1.47</ecNumber>
    </recommendedName>
</protein>
<keyword id="KW-0028">Amino-acid biosynthesis</keyword>
<keyword id="KW-0220">Diaminopimelate biosynthesis</keyword>
<keyword id="KW-0378">Hydrolase</keyword>
<keyword id="KW-0457">Lysine biosynthesis</keyword>
<keyword id="KW-1185">Reference proteome</keyword>
<sequence length="381" mass="42310">MLTEEELIQIRRHLHQIPELALQEFDTHQYLVETIAGFNQAFLEVRTFKELPTALMVLVHGKNPQRTIGYRTDIDALPVEEQTGLPYSSTHPGVMHACGHDIHMTVALGVLNYFSEHQPQDNILFFFQPAEESENGGKRAYELGLFSGKWKPDEFYGLHDNPDLPAGAIGCRMGTLFAGTTEVNIDLNGKGGHAAYPQNANDTVVAAASLILQVQTVISRSIDPIQSGVITLGKIDGGTIRNVIAGHTRIEGTIRGLTQTMIETIDNRLKDVCEGIGCSFNMDVSLELNQGGYWPVENNPELTKRFIHYMEETPTVNFIETEPAMTGEDFGYLLAKFPGTMFWLGVEDDSQLHSATLTPNEKAIKRGVDAITGFLEYRMQN</sequence>
<name>DAPEL_LIMRD</name>
<organism>
    <name type="scientific">Limosilactobacillus reuteri (strain DSM 20016)</name>
    <name type="common">Lactobacillus reuteri</name>
    <dbReference type="NCBI Taxonomy" id="557436"/>
    <lineage>
        <taxon>Bacteria</taxon>
        <taxon>Bacillati</taxon>
        <taxon>Bacillota</taxon>
        <taxon>Bacilli</taxon>
        <taxon>Lactobacillales</taxon>
        <taxon>Lactobacillaceae</taxon>
        <taxon>Limosilactobacillus</taxon>
    </lineage>
</organism>
<feature type="chain" id="PRO_0000376763" description="N-acetyldiaminopimelate deacetylase">
    <location>
        <begin position="1"/>
        <end position="381"/>
    </location>
</feature>
<feature type="active site" evidence="1">
    <location>
        <position position="73"/>
    </location>
</feature>
<feature type="active site" description="Proton acceptor" evidence="1">
    <location>
        <position position="132"/>
    </location>
</feature>
<accession>A5VJ57</accession>
<evidence type="ECO:0000255" key="1">
    <source>
        <dbReference type="HAMAP-Rule" id="MF_01692"/>
    </source>
</evidence>
<comment type="function">
    <text evidence="1">Catalyzes the conversion of N-acetyl-diaminopimelate to diaminopimelate and acetate.</text>
</comment>
<comment type="catalytic activity">
    <reaction evidence="1">
        <text>N-acetyl-(2S,6S)-2,6-diaminopimelate + H2O = (2S,6S)-2,6-diaminopimelate + acetate</text>
        <dbReference type="Rhea" id="RHEA:20405"/>
        <dbReference type="ChEBI" id="CHEBI:15377"/>
        <dbReference type="ChEBI" id="CHEBI:30089"/>
        <dbReference type="ChEBI" id="CHEBI:57609"/>
        <dbReference type="ChEBI" id="CHEBI:58767"/>
        <dbReference type="EC" id="3.5.1.47"/>
    </reaction>
</comment>
<comment type="pathway">
    <text evidence="1">Amino-acid biosynthesis; L-lysine biosynthesis via DAP pathway; LL-2,6-diaminopimelate from (S)-tetrahydrodipicolinate (acetylase route): step 3/3.</text>
</comment>
<comment type="similarity">
    <text evidence="1">Belongs to the peptidase M20A family. N-acetyldiaminopimelate deacetylase subfamily.</text>
</comment>